<accession>C4YNS4</accession>
<comment type="subcellular location">
    <subcellularLocation>
        <location evidence="1">Mitochondrion</location>
    </subcellularLocation>
</comment>
<comment type="similarity">
    <text evidence="4">Belongs to the AIM23 family.</text>
</comment>
<organism>
    <name type="scientific">Candida albicans (strain WO-1)</name>
    <name type="common">Yeast</name>
    <dbReference type="NCBI Taxonomy" id="294748"/>
    <lineage>
        <taxon>Eukaryota</taxon>
        <taxon>Fungi</taxon>
        <taxon>Dikarya</taxon>
        <taxon>Ascomycota</taxon>
        <taxon>Saccharomycotina</taxon>
        <taxon>Pichiomycetes</taxon>
        <taxon>Debaryomycetaceae</taxon>
        <taxon>Candida/Lodderomyces clade</taxon>
        <taxon>Candida</taxon>
    </lineage>
</organism>
<name>AIM23_CANAW</name>
<proteinExistence type="inferred from homology"/>
<reference key="1">
    <citation type="journal article" date="2009" name="Nature">
        <title>Evolution of pathogenicity and sexual reproduction in eight Candida genomes.</title>
        <authorList>
            <person name="Butler G."/>
            <person name="Rasmussen M.D."/>
            <person name="Lin M.F."/>
            <person name="Santos M.A.S."/>
            <person name="Sakthikumar S."/>
            <person name="Munro C.A."/>
            <person name="Rheinbay E."/>
            <person name="Grabherr M."/>
            <person name="Forche A."/>
            <person name="Reedy J.L."/>
            <person name="Agrafioti I."/>
            <person name="Arnaud M.B."/>
            <person name="Bates S."/>
            <person name="Brown A.J.P."/>
            <person name="Brunke S."/>
            <person name="Costanzo M.C."/>
            <person name="Fitzpatrick D.A."/>
            <person name="de Groot P.W.J."/>
            <person name="Harris D."/>
            <person name="Hoyer L.L."/>
            <person name="Hube B."/>
            <person name="Klis F.M."/>
            <person name="Kodira C."/>
            <person name="Lennard N."/>
            <person name="Logue M.E."/>
            <person name="Martin R."/>
            <person name="Neiman A.M."/>
            <person name="Nikolaou E."/>
            <person name="Quail M.A."/>
            <person name="Quinn J."/>
            <person name="Santos M.C."/>
            <person name="Schmitzberger F.F."/>
            <person name="Sherlock G."/>
            <person name="Shah P."/>
            <person name="Silverstein K.A.T."/>
            <person name="Skrzypek M.S."/>
            <person name="Soll D."/>
            <person name="Staggs R."/>
            <person name="Stansfield I."/>
            <person name="Stumpf M.P.H."/>
            <person name="Sudbery P.E."/>
            <person name="Srikantha T."/>
            <person name="Zeng Q."/>
            <person name="Berman J."/>
            <person name="Berriman M."/>
            <person name="Heitman J."/>
            <person name="Gow N.A.R."/>
            <person name="Lorenz M.C."/>
            <person name="Birren B.W."/>
            <person name="Kellis M."/>
            <person name="Cuomo C.A."/>
        </authorList>
    </citation>
    <scope>NUCLEOTIDE SEQUENCE [LARGE SCALE GENOMIC DNA]</scope>
    <source>
        <strain>WO-1</strain>
    </source>
</reference>
<dbReference type="EMBL" id="CM000310">
    <property type="protein sequence ID" value="EEQ44583.1"/>
    <property type="molecule type" value="Genomic_DNA"/>
</dbReference>
<dbReference type="PaxDb" id="5476-C4YNS4"/>
<dbReference type="VEuPathDB" id="FungiDB:CAWG_02857"/>
<dbReference type="HOGENOM" id="CLU_054408_0_0_1"/>
<dbReference type="OMA" id="KVSWQIS"/>
<dbReference type="OrthoDB" id="26603at766764"/>
<dbReference type="Proteomes" id="UP000001429">
    <property type="component" value="Chromosome 3"/>
</dbReference>
<dbReference type="GO" id="GO:0005739">
    <property type="term" value="C:mitochondrion"/>
    <property type="evidence" value="ECO:0007669"/>
    <property type="project" value="UniProtKB-SubCell"/>
</dbReference>
<dbReference type="InterPro" id="IPR029427">
    <property type="entry name" value="AIM23"/>
</dbReference>
<dbReference type="Pfam" id="PF14877">
    <property type="entry name" value="mIF3"/>
    <property type="match status" value="1"/>
</dbReference>
<gene>
    <name type="primary">AIM23</name>
    <name type="ORF">CAWG_02857</name>
</gene>
<feature type="transit peptide" description="Mitochondrion" evidence="2">
    <location>
        <begin position="1"/>
        <end position="18"/>
    </location>
</feature>
<feature type="chain" id="PRO_0000399529" description="Altered inheritance of mitochondria protein 23, mitochondrial">
    <location>
        <begin position="19"/>
        <end position="432"/>
    </location>
</feature>
<feature type="region of interest" description="Disordered" evidence="3">
    <location>
        <begin position="36"/>
        <end position="91"/>
    </location>
</feature>
<feature type="region of interest" description="Disordered" evidence="3">
    <location>
        <begin position="368"/>
        <end position="432"/>
    </location>
</feature>
<feature type="compositionally biased region" description="Low complexity" evidence="3">
    <location>
        <begin position="36"/>
        <end position="50"/>
    </location>
</feature>
<feature type="compositionally biased region" description="Low complexity" evidence="3">
    <location>
        <begin position="75"/>
        <end position="91"/>
    </location>
</feature>
<feature type="compositionally biased region" description="Basic residues" evidence="3">
    <location>
        <begin position="389"/>
        <end position="406"/>
    </location>
</feature>
<feature type="compositionally biased region" description="Low complexity" evidence="3">
    <location>
        <begin position="407"/>
        <end position="416"/>
    </location>
</feature>
<keyword id="KW-0496">Mitochondrion</keyword>
<keyword id="KW-0809">Transit peptide</keyword>
<sequence>MSLRIILKRDFSQCIRVLESGSKSPTIANRFQAQYGNKNNNMKRNTANNGTGNGNRFHNKYNNESRRPYPKTKYQQQQQQQQQQRKPQQHQQYIIDPRKIKFDNGTESARNAIEEIFNRVNQLQRNYQIQLITDSGLKKCHLSEILQKLDLSINGLQLIDKSTTTTTTTTTTTTTTTNTSDEDLPLIKIITVRDMINQYSTYLNNLKQLELIKLGSSKTLKTLDIKLKLEQKKSTTKEILMKWSINNNDFKLQKTNEIKKLINNNGGNGKSFLINMVYNKRNTNKPINTIFKRRSNTEEDEQELIEIELKRRQLLIENLQSLLTELNCKWTIEGDINTKMTFNVTPKGQPTTIEPSTTTNIVDEEIEDYNNNNNNDDGDCDEKKMNRTERKKRKSEQQKQKQKQKQQSKTNTNSNTAKEEDLDALYSFKIED</sequence>
<protein>
    <recommendedName>
        <fullName>Altered inheritance of mitochondria protein 23, mitochondrial</fullName>
    </recommendedName>
</protein>
<evidence type="ECO:0000250" key="1"/>
<evidence type="ECO:0000255" key="2"/>
<evidence type="ECO:0000256" key="3">
    <source>
        <dbReference type="SAM" id="MobiDB-lite"/>
    </source>
</evidence>
<evidence type="ECO:0000305" key="4"/>